<dbReference type="EC" id="2.7.11.1" evidence="2"/>
<dbReference type="EMBL" id="LK023118">
    <property type="protein sequence ID" value="VUC54180.1"/>
    <property type="molecule type" value="Genomic_DNA"/>
</dbReference>
<dbReference type="RefSeq" id="XP_675880.1">
    <property type="nucleotide sequence ID" value="XM_670788.1"/>
</dbReference>
<dbReference type="PDB" id="3Q5I">
    <property type="method" value="X-ray"/>
    <property type="resolution" value="2.10 A"/>
    <property type="chains" value="A=38-523"/>
</dbReference>
<dbReference type="PDBsum" id="3Q5I"/>
<dbReference type="SMR" id="A0A509AHB6"/>
<dbReference type="FunCoup" id="A0A509AHB6">
    <property type="interactions" value="3"/>
</dbReference>
<dbReference type="STRING" id="5823.A0A509AHB6"/>
<dbReference type="VEuPathDB" id="PlasmoDB:PBANKA_0314200"/>
<dbReference type="InParanoid" id="A0A509AHB6"/>
<dbReference type="OMA" id="ICDHKTP"/>
<dbReference type="EvolutionaryTrace" id="A0A509AHB6"/>
<dbReference type="Proteomes" id="UP000074855">
    <property type="component" value="Chromosome 3"/>
</dbReference>
<dbReference type="GO" id="GO:0005737">
    <property type="term" value="C:cytoplasm"/>
    <property type="evidence" value="ECO:0007669"/>
    <property type="project" value="UniProtKB-SubCell"/>
</dbReference>
<dbReference type="GO" id="GO:0020002">
    <property type="term" value="C:host cell plasma membrane"/>
    <property type="evidence" value="ECO:0007669"/>
    <property type="project" value="UniProtKB-SubCell"/>
</dbReference>
<dbReference type="GO" id="GO:0031514">
    <property type="term" value="C:motile cilium"/>
    <property type="evidence" value="ECO:0007669"/>
    <property type="project" value="UniProtKB-SubCell"/>
</dbReference>
<dbReference type="GO" id="GO:0005886">
    <property type="term" value="C:plasma membrane"/>
    <property type="evidence" value="ECO:0000315"/>
    <property type="project" value="UniProtKB"/>
</dbReference>
<dbReference type="GO" id="GO:0020005">
    <property type="term" value="C:symbiont-containing vacuole membrane"/>
    <property type="evidence" value="ECO:0007669"/>
    <property type="project" value="UniProtKB-SubCell"/>
</dbReference>
<dbReference type="GO" id="GO:0005524">
    <property type="term" value="F:ATP binding"/>
    <property type="evidence" value="ECO:0007669"/>
    <property type="project" value="UniProtKB-KW"/>
</dbReference>
<dbReference type="GO" id="GO:0005509">
    <property type="term" value="F:calcium ion binding"/>
    <property type="evidence" value="ECO:0007669"/>
    <property type="project" value="InterPro"/>
</dbReference>
<dbReference type="GO" id="GO:0004674">
    <property type="term" value="F:protein serine/threonine kinase activity"/>
    <property type="evidence" value="ECO:0007669"/>
    <property type="project" value="UniProtKB-KW"/>
</dbReference>
<dbReference type="GO" id="GO:2000147">
    <property type="term" value="P:positive regulation of cell motility"/>
    <property type="evidence" value="ECO:0000315"/>
    <property type="project" value="UniProtKB"/>
</dbReference>
<dbReference type="GO" id="GO:0045727">
    <property type="term" value="P:positive regulation of translation"/>
    <property type="evidence" value="ECO:0000315"/>
    <property type="project" value="UniProtKB"/>
</dbReference>
<dbReference type="CDD" id="cd00051">
    <property type="entry name" value="EFh"/>
    <property type="match status" value="2"/>
</dbReference>
<dbReference type="CDD" id="cd05117">
    <property type="entry name" value="STKc_CAMK"/>
    <property type="match status" value="1"/>
</dbReference>
<dbReference type="FunFam" id="1.10.510.10:FF:000398">
    <property type="entry name" value="Calcium-dependent protein kinase 1"/>
    <property type="match status" value="1"/>
</dbReference>
<dbReference type="FunFam" id="3.30.200.20:FF:000315">
    <property type="entry name" value="Calcium-dependent protein kinase 3"/>
    <property type="match status" value="1"/>
</dbReference>
<dbReference type="FunFam" id="1.10.238.10:FF:000003">
    <property type="entry name" value="Calmodulin A"/>
    <property type="match status" value="1"/>
</dbReference>
<dbReference type="Gene3D" id="1.10.238.10">
    <property type="entry name" value="EF-hand"/>
    <property type="match status" value="2"/>
</dbReference>
<dbReference type="Gene3D" id="3.30.200.20">
    <property type="entry name" value="Phosphorylase Kinase, domain 1"/>
    <property type="match status" value="1"/>
</dbReference>
<dbReference type="Gene3D" id="1.10.510.10">
    <property type="entry name" value="Transferase(Phosphotransferase) domain 1"/>
    <property type="match status" value="1"/>
</dbReference>
<dbReference type="InterPro" id="IPR050205">
    <property type="entry name" value="CDPK_Ser/Thr_kinases"/>
</dbReference>
<dbReference type="InterPro" id="IPR011992">
    <property type="entry name" value="EF-hand-dom_pair"/>
</dbReference>
<dbReference type="InterPro" id="IPR018247">
    <property type="entry name" value="EF_Hand_1_Ca_BS"/>
</dbReference>
<dbReference type="InterPro" id="IPR002048">
    <property type="entry name" value="EF_hand_dom"/>
</dbReference>
<dbReference type="InterPro" id="IPR011009">
    <property type="entry name" value="Kinase-like_dom_sf"/>
</dbReference>
<dbReference type="InterPro" id="IPR000719">
    <property type="entry name" value="Prot_kinase_dom"/>
</dbReference>
<dbReference type="InterPro" id="IPR017441">
    <property type="entry name" value="Protein_kinase_ATP_BS"/>
</dbReference>
<dbReference type="InterPro" id="IPR008271">
    <property type="entry name" value="Ser/Thr_kinase_AS"/>
</dbReference>
<dbReference type="PANTHER" id="PTHR24349">
    <property type="entry name" value="SERINE/THREONINE-PROTEIN KINASE"/>
    <property type="match status" value="1"/>
</dbReference>
<dbReference type="Pfam" id="PF13499">
    <property type="entry name" value="EF-hand_7"/>
    <property type="match status" value="2"/>
</dbReference>
<dbReference type="Pfam" id="PF00069">
    <property type="entry name" value="Pkinase"/>
    <property type="match status" value="1"/>
</dbReference>
<dbReference type="SMART" id="SM00054">
    <property type="entry name" value="EFh"/>
    <property type="match status" value="4"/>
</dbReference>
<dbReference type="SMART" id="SM00220">
    <property type="entry name" value="S_TKc"/>
    <property type="match status" value="1"/>
</dbReference>
<dbReference type="SUPFAM" id="SSF47473">
    <property type="entry name" value="EF-hand"/>
    <property type="match status" value="1"/>
</dbReference>
<dbReference type="SUPFAM" id="SSF56112">
    <property type="entry name" value="Protein kinase-like (PK-like)"/>
    <property type="match status" value="1"/>
</dbReference>
<dbReference type="PROSITE" id="PS00018">
    <property type="entry name" value="EF_HAND_1"/>
    <property type="match status" value="4"/>
</dbReference>
<dbReference type="PROSITE" id="PS50222">
    <property type="entry name" value="EF_HAND_2"/>
    <property type="match status" value="4"/>
</dbReference>
<dbReference type="PROSITE" id="PS00107">
    <property type="entry name" value="PROTEIN_KINASE_ATP"/>
    <property type="match status" value="1"/>
</dbReference>
<dbReference type="PROSITE" id="PS50011">
    <property type="entry name" value="PROTEIN_KINASE_DOM"/>
    <property type="match status" value="1"/>
</dbReference>
<dbReference type="PROSITE" id="PS00108">
    <property type="entry name" value="PROTEIN_KINASE_ST"/>
    <property type="match status" value="1"/>
</dbReference>
<proteinExistence type="evidence at protein level"/>
<reference evidence="16" key="1">
    <citation type="journal article" date="2014" name="BMC Biol.">
        <title>A comprehensive evaluation of rodent malaria parasite genomes and gene expression.</title>
        <authorList>
            <person name="Otto T.D."/>
            <person name="Bohme U."/>
            <person name="Jackson A.P."/>
            <person name="Hunt M."/>
            <person name="Franke-Fayard B."/>
            <person name="Hoeijmakers W.A."/>
            <person name="Religa A.A."/>
            <person name="Robertson L."/>
            <person name="Sanders M."/>
            <person name="Ogun S.A."/>
            <person name="Cunningham D."/>
            <person name="Erhart A."/>
            <person name="Billker O."/>
            <person name="Khan S.M."/>
            <person name="Stunnenberg H.G."/>
            <person name="Langhorne J."/>
            <person name="Holder A.A."/>
            <person name="Waters A.P."/>
            <person name="Newbold C.I."/>
            <person name="Pain A."/>
            <person name="Berriman M."/>
            <person name="Janse C.J."/>
        </authorList>
    </citation>
    <scope>NUCLEOTIDE SEQUENCE [LARGE SCALE GENOMIC DNA]</scope>
    <source>
        <strain evidence="16">ANKA</strain>
    </source>
</reference>
<reference evidence="12" key="2">
    <citation type="journal article" date="2012" name="Cell Host Microbe">
        <title>A Plasmodium calcium-dependent protein kinase controls zygote development and transmission by translationally activating repressed mRNAs.</title>
        <authorList>
            <person name="Sebastian S."/>
            <person name="Brochet M."/>
            <person name="Collins M.O."/>
            <person name="Schwach F."/>
            <person name="Jones M.L."/>
            <person name="Goulding D."/>
            <person name="Rayner J.C."/>
            <person name="Choudhary J.S."/>
            <person name="Billker O."/>
        </authorList>
    </citation>
    <scope>FUNCTION</scope>
    <scope>SUBCELLULAR LOCATION</scope>
    <scope>DEVELOPMENTAL STAGE</scope>
    <scope>DISRUPTION PHENOTYPE</scope>
</reference>
<reference evidence="12" key="3">
    <citation type="journal article" date="2013" name="PLoS ONE">
        <title>Plasmodium berghei calcium dependent protein kinase 1 is not required for host cell invasion.</title>
        <authorList>
            <person name="Jebiwott S."/>
            <person name="Govindaswamy K."/>
            <person name="Mbugua A."/>
            <person name="Bhanot P."/>
        </authorList>
    </citation>
    <scope>FUNCTION</scope>
    <scope>DISRUPTION PHENOTYPE</scope>
</reference>
<reference evidence="12" key="4">
    <citation type="journal article" date="2020" name="PLoS Pathog.">
        <title>Overlapping and distinct roles of CDPK family members in the pre-erythrocytic stages of the rodent malaria parasite, Plasmodium berghei.</title>
        <authorList>
            <person name="Govindasamy K."/>
            <person name="Bhanot P."/>
        </authorList>
    </citation>
    <scope>FUNCTION</scope>
    <scope>DEVELOPMENTAL STAGE</scope>
</reference>
<name>CDPK1_PLABA</name>
<comment type="function">
    <text evidence="2 8 9 10">Calcium-dependent protein kinase which acts as a sensor and effector of intracellular Ca(2+) levels probably in part downstream of cGMP-activated PKG kinase (By similarity). During the liver stage, involved in sporozoite motility and thus in sporozoite invasion of host hepatocytes, probably together with CDPK4 and CDPK5 (PubMed:32866196). In the mosquito midgut and during the last stage of male gamete exflagellation, may play a role in the rupture of the host erythrocyte membrane (PubMed:22817984). In the mosquito midgut, required for the differentiation of the zygote into the ookinete by promoting the translational activation of a subset of repressed mRNAs; these mRNAs are kept repressed in the zygote by the DOZI- or CITH-containing mRNP complexes (PubMed:22817984, PubMed:24265753). Dispensable during the asexual blood stage (PubMed:24265753).</text>
</comment>
<comment type="catalytic activity">
    <reaction evidence="2">
        <text>L-seryl-[protein] + ATP = O-phospho-L-seryl-[protein] + ADP + H(+)</text>
        <dbReference type="Rhea" id="RHEA:17989"/>
        <dbReference type="Rhea" id="RHEA-COMP:9863"/>
        <dbReference type="Rhea" id="RHEA-COMP:11604"/>
        <dbReference type="ChEBI" id="CHEBI:15378"/>
        <dbReference type="ChEBI" id="CHEBI:29999"/>
        <dbReference type="ChEBI" id="CHEBI:30616"/>
        <dbReference type="ChEBI" id="CHEBI:83421"/>
        <dbReference type="ChEBI" id="CHEBI:456216"/>
        <dbReference type="EC" id="2.7.11.1"/>
    </reaction>
</comment>
<comment type="catalytic activity">
    <reaction evidence="2">
        <text>L-threonyl-[protein] + ATP = O-phospho-L-threonyl-[protein] + ADP + H(+)</text>
        <dbReference type="Rhea" id="RHEA:46608"/>
        <dbReference type="Rhea" id="RHEA-COMP:11060"/>
        <dbReference type="Rhea" id="RHEA-COMP:11605"/>
        <dbReference type="ChEBI" id="CHEBI:15378"/>
        <dbReference type="ChEBI" id="CHEBI:30013"/>
        <dbReference type="ChEBI" id="CHEBI:30616"/>
        <dbReference type="ChEBI" id="CHEBI:61977"/>
        <dbReference type="ChEBI" id="CHEBI:456216"/>
        <dbReference type="EC" id="2.7.11.1"/>
    </reaction>
</comment>
<comment type="cofactor">
    <cofactor evidence="2">
        <name>Mg(2+)</name>
        <dbReference type="ChEBI" id="CHEBI:18420"/>
    </cofactor>
</comment>
<comment type="activity regulation">
    <text evidence="2">Activated by calcium. Upon calcium binding to the EF-hand domains, the C-terminus of the junction domain (J domain) undergoes a conformational change which results in the dissociation of the pseudo-substrate inhibitory motif from the catalytic domain. This, in turn may facilitate the autophosphorylation of the activation loop at Thr-230, which leads to the kinase activation.</text>
</comment>
<comment type="subunit">
    <text evidence="2">Monomer.</text>
</comment>
<comment type="subcellular location">
    <subcellularLocation>
        <location evidence="2">Membrane</location>
        <topology evidence="2">Lipid-anchor</topology>
    </subcellularLocation>
    <subcellularLocation>
        <location evidence="8">Cell membrane</location>
        <topology evidence="2">Lipid-anchor</topology>
        <orientation evidence="2">Cytoplasmic side</orientation>
    </subcellularLocation>
    <subcellularLocation>
        <location evidence="2">Parasitophorous vacuole membrane</location>
        <topology evidence="2">Lipid-anchor</topology>
    </subcellularLocation>
    <subcellularLocation>
        <location evidence="1">Cytoplasm</location>
    </subcellularLocation>
    <subcellularLocation>
        <location evidence="1">Cell projection</location>
        <location evidence="1">Cilium</location>
        <location evidence="1">Flagellum</location>
    </subcellularLocation>
    <subcellularLocation>
        <location evidence="2">Host cell membrane</location>
        <topology evidence="2">Lipid-anchor</topology>
    </subcellularLocation>
    <text evidence="2">Calcium and/or autophosphorylation does not affect membrane localization.</text>
</comment>
<comment type="developmental stage">
    <text evidence="8 10">During the asexual blood stage, expressed in schizonts (PubMed:22817984). Expressed in gametocytes (PubMed:22817984). Expressed in ookinetes and oocyst early stages (PubMed:22817984). Expressed in sporozoites (PubMed:22817984, PubMed:32866196). Not expressed during the liver stage (PubMed:32866196).</text>
</comment>
<comment type="domain">
    <text evidence="2">The junction domain (J domain) is composed of 2 motifs that maintain the kinase inactive. The N-terminal autoinhibitory motif acts as a pseudosubstrate inhibiting the catalytic domain while the C-terminal motif binds the EF-hand domains.</text>
</comment>
<comment type="PTM">
    <text evidence="2">Myristoylated. Myristoylation and palmitoylation are required for the localization to the parasitophorous vacuole membrane.</text>
</comment>
<comment type="PTM">
    <text evidence="2">Palmitoylated. Palmitoylation increases in merozoites in response to low level of extracellular K(+) in the host blood. Myristoylation and palmitoylation are required for the localization to the parasitophorous vacuole membrane.</text>
</comment>
<comment type="PTM">
    <text evidence="2">Phosphorylation at Thr-230 may regulate CDPK1 kinase activity. Phosphorylation increases in response to an increase in intracellular Ca(2+) levels. Autophosphorylated in vitro. Autophosphorylation does not affect membrane localization in vitro.</text>
</comment>
<comment type="disruption phenotype">
    <text evidence="8 9 10">In the mosquito midgut, male gametocyte exflagellation is normal; however, the rupture of the host erythrocyte cell membrane is delayed (PubMed:22817984). Fertilization is normal, however zygote development into ookinetes is arrested at the retort stage where ookinetes are still immotile (PubMed:22817984, PubMed:24265753). In arrested ookinetes, protein levels, but not mRNA levels, of a subset of proteins including MyoA and MTIP, two components of the motor complex, CTRP and SOAP are strongly reduced (PubMed:22817984). In arrested ookinetes, apical complex including collar, apical rings and micronemes and the pellicle, consisting of the plasma membrane, the inner membrane complex and the subpellicular microtubules are normally assembled (PubMed:22817984). During host liver invasion, sporozoite attachment to the substrate is normal but sporozoite uninterrupted circular movement is impaired (PubMed:32866196). No effect on cell traversal but reduces invasion of host hepatocytes (PubMed:32866196). No defect in the asexual erythrocyte stage; infection, development and egress from host erythrocytes are normal (PubMed:24265753). Conditional knockout in sporozoites, does not affect sporozoite invasion of the mosquito salivary gland or invasion of host hepatocytes (PubMed:22817984).</text>
</comment>
<comment type="similarity">
    <text evidence="12">Belongs to the protein kinase superfamily. Ser/Thr protein kinase family. CDPK subfamily.</text>
</comment>
<comment type="caution">
    <text evidence="13 14">Unlike P.falciparum CDPK1, appears not to be involved in the asexual blood stage and in male gamete exflagellation prior host erythrocyte membrane rupture.</text>
</comment>
<accession>A0A509AHB6</accession>
<sequence>MGCNQSKSANDVRGNKVNHVNSKKKNNKREDTNDGEEIAINPGMYVRKKEGKIGESYFKVRKLGSGAYGEVLLCKEKNGHSEKAIKVIKKSQFDKGRYSDDNKNIEKFHEEIYNEISLLKSLDHPNIIKLFDVFEDKKYFYLVTEFYEGGELFEQIINRHKFDECDAANIMKQILSGICYLHKHNIVHRDIKPENILLENKNSLLNIKIVDFGLSSFFSKDYKLRDRLGTAYYIAPEVLKKKYNEKCDVWSCGVIMYILLCGYPPFGGQNDQDIIKKVEKGKYYFDFNDWKNISDEAKELIKLMLTYDYNKRCTAEEALNSRWIKKYANNINKSDQKTLCGALSNMRKFEGSQKLAQAAILFIGSKLTTLEERKELTDIFKKLDKNGDGQLDKKELIEGYNVLRNFKNELGELKNVEEEVDNILKEVDFDKNGYIEYSEFISVCMDKQILFSEERLRRAFNLFDTDKSGKITKEELANLFGLTSISEKTWNDVLGEADQNKDNMIDFDEFVSMMHKICDHKTF</sequence>
<organism evidence="16">
    <name type="scientific">Plasmodium berghei (strain Anka)</name>
    <dbReference type="NCBI Taxonomy" id="5823"/>
    <lineage>
        <taxon>Eukaryota</taxon>
        <taxon>Sar</taxon>
        <taxon>Alveolata</taxon>
        <taxon>Apicomplexa</taxon>
        <taxon>Aconoidasida</taxon>
        <taxon>Haemosporida</taxon>
        <taxon>Plasmodiidae</taxon>
        <taxon>Plasmodium</taxon>
        <taxon>Plasmodium (Vinckeia)</taxon>
    </lineage>
</organism>
<protein>
    <recommendedName>
        <fullName evidence="11">Calcium-dependent protein kinase 1</fullName>
        <ecNumber evidence="2">2.7.11.1</ecNumber>
    </recommendedName>
    <alternativeName>
        <fullName evidence="11">PbCDPK1</fullName>
    </alternativeName>
</protein>
<evidence type="ECO:0000250" key="1">
    <source>
        <dbReference type="UniProtKB" id="A0A2I0BVG8"/>
    </source>
</evidence>
<evidence type="ECO:0000250" key="2">
    <source>
        <dbReference type="UniProtKB" id="P62344"/>
    </source>
</evidence>
<evidence type="ECO:0000255" key="3">
    <source>
        <dbReference type="PROSITE-ProRule" id="PRU00159"/>
    </source>
</evidence>
<evidence type="ECO:0000255" key="4">
    <source>
        <dbReference type="PROSITE-ProRule" id="PRU00448"/>
    </source>
</evidence>
<evidence type="ECO:0000255" key="5">
    <source>
        <dbReference type="PROSITE-ProRule" id="PRU10027"/>
    </source>
</evidence>
<evidence type="ECO:0000255" key="6">
    <source>
        <dbReference type="PROSITE-ProRule" id="PRU10141"/>
    </source>
</evidence>
<evidence type="ECO:0000256" key="7">
    <source>
        <dbReference type="SAM" id="MobiDB-lite"/>
    </source>
</evidence>
<evidence type="ECO:0000269" key="8">
    <source>
    </source>
</evidence>
<evidence type="ECO:0000269" key="9">
    <source>
    </source>
</evidence>
<evidence type="ECO:0000269" key="10">
    <source>
    </source>
</evidence>
<evidence type="ECO:0000303" key="11">
    <source>
    </source>
</evidence>
<evidence type="ECO:0000305" key="12"/>
<evidence type="ECO:0000305" key="13">
    <source>
    </source>
</evidence>
<evidence type="ECO:0000305" key="14">
    <source>
    </source>
</evidence>
<evidence type="ECO:0000312" key="15">
    <source>
        <dbReference type="EMBL" id="VUC54180.1"/>
    </source>
</evidence>
<evidence type="ECO:0000312" key="16">
    <source>
        <dbReference type="Proteomes" id="UP000074855"/>
    </source>
</evidence>
<evidence type="ECO:0007829" key="17">
    <source>
        <dbReference type="PDB" id="3Q5I"/>
    </source>
</evidence>
<keyword id="KW-0002">3D-structure</keyword>
<keyword id="KW-0067">ATP-binding</keyword>
<keyword id="KW-0106">Calcium</keyword>
<keyword id="KW-1003">Cell membrane</keyword>
<keyword id="KW-0966">Cell projection</keyword>
<keyword id="KW-0969">Cilium</keyword>
<keyword id="KW-0963">Cytoplasm</keyword>
<keyword id="KW-0282">Flagellum</keyword>
<keyword id="KW-1032">Host cell membrane</keyword>
<keyword id="KW-1043">Host membrane</keyword>
<keyword id="KW-0418">Kinase</keyword>
<keyword id="KW-0449">Lipoprotein</keyword>
<keyword id="KW-0460">Magnesium</keyword>
<keyword id="KW-0472">Membrane</keyword>
<keyword id="KW-0479">Metal-binding</keyword>
<keyword id="KW-0519">Myristate</keyword>
<keyword id="KW-0547">Nucleotide-binding</keyword>
<keyword id="KW-0564">Palmitate</keyword>
<keyword id="KW-0597">Phosphoprotein</keyword>
<keyword id="KW-1185">Reference proteome</keyword>
<keyword id="KW-0677">Repeat</keyword>
<keyword id="KW-0723">Serine/threonine-protein kinase</keyword>
<keyword id="KW-0808">Transferase</keyword>
<feature type="initiator methionine" description="Removed" evidence="2">
    <location>
        <position position="1"/>
    </location>
</feature>
<feature type="chain" id="PRO_0000453002" description="Calcium-dependent protein kinase 1">
    <location>
        <begin position="2"/>
        <end position="523"/>
    </location>
</feature>
<feature type="domain" description="Protein kinase" evidence="3">
    <location>
        <begin position="57"/>
        <end position="324"/>
    </location>
</feature>
<feature type="domain" description="EF-hand 1" evidence="4">
    <location>
        <begin position="371"/>
        <end position="406"/>
    </location>
</feature>
<feature type="domain" description="EF-hand 2" evidence="4">
    <location>
        <begin position="415"/>
        <end position="450"/>
    </location>
</feature>
<feature type="domain" description="EF-hand 3" evidence="4">
    <location>
        <begin position="451"/>
        <end position="486"/>
    </location>
</feature>
<feature type="domain" description="EF-hand 4" evidence="4">
    <location>
        <begin position="487"/>
        <end position="520"/>
    </location>
</feature>
<feature type="region of interest" description="Disordered" evidence="7">
    <location>
        <begin position="1"/>
        <end position="36"/>
    </location>
</feature>
<feature type="region of interest" description="J domain" evidence="2">
    <location>
        <begin position="345"/>
        <end position="363"/>
    </location>
</feature>
<feature type="short sequence motif" description="J domain autoinhibitory motif" evidence="2">
    <location>
        <begin position="345"/>
        <end position="352"/>
    </location>
</feature>
<feature type="short sequence motif" description="J domain interacts with the EF-hand domains" evidence="2">
    <location>
        <begin position="353"/>
        <end position="363"/>
    </location>
</feature>
<feature type="active site" description="Proton acceptor" evidence="5">
    <location>
        <position position="190"/>
    </location>
</feature>
<feature type="binding site" evidence="3">
    <location>
        <begin position="63"/>
        <end position="71"/>
    </location>
    <ligand>
        <name>ATP</name>
        <dbReference type="ChEBI" id="CHEBI:30616"/>
    </ligand>
</feature>
<feature type="binding site" evidence="3">
    <location>
        <position position="86"/>
    </location>
    <ligand>
        <name>ATP</name>
        <dbReference type="ChEBI" id="CHEBI:30616"/>
    </ligand>
</feature>
<feature type="binding site" evidence="6">
    <location>
        <position position="90"/>
    </location>
    <ligand>
        <name>ATP</name>
        <dbReference type="ChEBI" id="CHEBI:30616"/>
    </ligand>
</feature>
<feature type="binding site" evidence="4">
    <location>
        <position position="384"/>
    </location>
    <ligand>
        <name>Ca(2+)</name>
        <dbReference type="ChEBI" id="CHEBI:29108"/>
        <label>1</label>
    </ligand>
</feature>
<feature type="binding site" evidence="4">
    <location>
        <position position="386"/>
    </location>
    <ligand>
        <name>Ca(2+)</name>
        <dbReference type="ChEBI" id="CHEBI:29108"/>
        <label>1</label>
    </ligand>
</feature>
<feature type="binding site" evidence="4">
    <location>
        <position position="388"/>
    </location>
    <ligand>
        <name>Ca(2+)</name>
        <dbReference type="ChEBI" id="CHEBI:29108"/>
        <label>1</label>
    </ligand>
</feature>
<feature type="binding site" evidence="4">
    <location>
        <position position="390"/>
    </location>
    <ligand>
        <name>Ca(2+)</name>
        <dbReference type="ChEBI" id="CHEBI:29108"/>
        <label>1</label>
    </ligand>
</feature>
<feature type="binding site" evidence="4">
    <location>
        <position position="395"/>
    </location>
    <ligand>
        <name>Ca(2+)</name>
        <dbReference type="ChEBI" id="CHEBI:29108"/>
        <label>1</label>
    </ligand>
</feature>
<feature type="binding site" evidence="4">
    <location>
        <position position="428"/>
    </location>
    <ligand>
        <name>Ca(2+)</name>
        <dbReference type="ChEBI" id="CHEBI:29108"/>
        <label>2</label>
    </ligand>
</feature>
<feature type="binding site" evidence="4">
    <location>
        <position position="430"/>
    </location>
    <ligand>
        <name>Ca(2+)</name>
        <dbReference type="ChEBI" id="CHEBI:29108"/>
        <label>2</label>
    </ligand>
</feature>
<feature type="binding site" evidence="4">
    <location>
        <position position="432"/>
    </location>
    <ligand>
        <name>Ca(2+)</name>
        <dbReference type="ChEBI" id="CHEBI:29108"/>
        <label>2</label>
    </ligand>
</feature>
<feature type="binding site" evidence="4">
    <location>
        <position position="434"/>
    </location>
    <ligand>
        <name>Ca(2+)</name>
        <dbReference type="ChEBI" id="CHEBI:29108"/>
        <label>2</label>
    </ligand>
</feature>
<feature type="binding site" evidence="4">
    <location>
        <position position="439"/>
    </location>
    <ligand>
        <name>Ca(2+)</name>
        <dbReference type="ChEBI" id="CHEBI:29108"/>
        <label>2</label>
    </ligand>
</feature>
<feature type="binding site" evidence="4">
    <location>
        <position position="464"/>
    </location>
    <ligand>
        <name>Ca(2+)</name>
        <dbReference type="ChEBI" id="CHEBI:29108"/>
        <label>3</label>
    </ligand>
</feature>
<feature type="binding site" evidence="4">
    <location>
        <position position="466"/>
    </location>
    <ligand>
        <name>Ca(2+)</name>
        <dbReference type="ChEBI" id="CHEBI:29108"/>
        <label>3</label>
    </ligand>
</feature>
<feature type="binding site" evidence="4">
    <location>
        <position position="468"/>
    </location>
    <ligand>
        <name>Ca(2+)</name>
        <dbReference type="ChEBI" id="CHEBI:29108"/>
        <label>3</label>
    </ligand>
</feature>
<feature type="binding site" evidence="4">
    <location>
        <position position="470"/>
    </location>
    <ligand>
        <name>Ca(2+)</name>
        <dbReference type="ChEBI" id="CHEBI:29108"/>
        <label>3</label>
    </ligand>
</feature>
<feature type="binding site" evidence="4">
    <location>
        <position position="475"/>
    </location>
    <ligand>
        <name>Ca(2+)</name>
        <dbReference type="ChEBI" id="CHEBI:29108"/>
        <label>3</label>
    </ligand>
</feature>
<feature type="binding site" evidence="4">
    <location>
        <position position="498"/>
    </location>
    <ligand>
        <name>Ca(2+)</name>
        <dbReference type="ChEBI" id="CHEBI:29108"/>
        <label>4</label>
    </ligand>
</feature>
<feature type="binding site" evidence="4">
    <location>
        <position position="500"/>
    </location>
    <ligand>
        <name>Ca(2+)</name>
        <dbReference type="ChEBI" id="CHEBI:29108"/>
        <label>4</label>
    </ligand>
</feature>
<feature type="binding site" evidence="4">
    <location>
        <position position="502"/>
    </location>
    <ligand>
        <name>Ca(2+)</name>
        <dbReference type="ChEBI" id="CHEBI:29108"/>
        <label>4</label>
    </ligand>
</feature>
<feature type="binding site" evidence="4">
    <location>
        <position position="504"/>
    </location>
    <ligand>
        <name>Ca(2+)</name>
        <dbReference type="ChEBI" id="CHEBI:29108"/>
        <label>4</label>
    </ligand>
</feature>
<feature type="binding site" evidence="4">
    <location>
        <position position="509"/>
    </location>
    <ligand>
        <name>Ca(2+)</name>
        <dbReference type="ChEBI" id="CHEBI:29108"/>
        <label>4</label>
    </ligand>
</feature>
<feature type="modified residue" description="Phosphoserine" evidence="2">
    <location>
        <position position="65"/>
    </location>
</feature>
<feature type="modified residue" description="Phosphoserine" evidence="2">
    <location>
        <position position="117"/>
    </location>
</feature>
<feature type="modified residue" description="Phosphoserine" evidence="2">
    <location>
        <position position="216"/>
    </location>
</feature>
<feature type="modified residue" description="Phosphoserine" evidence="2">
    <location>
        <position position="219"/>
    </location>
</feature>
<feature type="modified residue" description="Phosphothreonine" evidence="2">
    <location>
        <position position="230"/>
    </location>
</feature>
<feature type="modified residue" description="Phosphoserine" evidence="2">
    <location>
        <position position="334"/>
    </location>
</feature>
<feature type="lipid moiety-binding region" description="N-myristoyl glycine" evidence="2">
    <location>
        <position position="2"/>
    </location>
</feature>
<feature type="lipid moiety-binding region" description="S-palmitoyl cysteine" evidence="2">
    <location>
        <position position="3"/>
    </location>
</feature>
<feature type="helix" evidence="17">
    <location>
        <begin position="42"/>
        <end position="45"/>
    </location>
</feature>
<feature type="helix" evidence="17">
    <location>
        <begin position="53"/>
        <end position="55"/>
    </location>
</feature>
<feature type="strand" evidence="17">
    <location>
        <begin position="57"/>
        <end position="64"/>
    </location>
</feature>
<feature type="strand" evidence="17">
    <location>
        <begin position="69"/>
        <end position="76"/>
    </location>
</feature>
<feature type="turn" evidence="17">
    <location>
        <begin position="77"/>
        <end position="79"/>
    </location>
</feature>
<feature type="strand" evidence="17">
    <location>
        <begin position="82"/>
        <end position="89"/>
    </location>
</feature>
<feature type="helix" evidence="17">
    <location>
        <begin position="109"/>
        <end position="120"/>
    </location>
</feature>
<feature type="strand" evidence="17">
    <location>
        <begin position="130"/>
        <end position="135"/>
    </location>
</feature>
<feature type="strand" evidence="17">
    <location>
        <begin position="137"/>
        <end position="145"/>
    </location>
</feature>
<feature type="helix" evidence="17">
    <location>
        <begin position="152"/>
        <end position="159"/>
    </location>
</feature>
<feature type="helix" evidence="17">
    <location>
        <begin position="164"/>
        <end position="183"/>
    </location>
</feature>
<feature type="helix" evidence="17">
    <location>
        <begin position="193"/>
        <end position="195"/>
    </location>
</feature>
<feature type="strand" evidence="17">
    <location>
        <begin position="196"/>
        <end position="200"/>
    </location>
</feature>
<feature type="strand" evidence="17">
    <location>
        <begin position="205"/>
        <end position="209"/>
    </location>
</feature>
<feature type="turn" evidence="17">
    <location>
        <begin position="231"/>
        <end position="233"/>
    </location>
</feature>
<feature type="helix" evidence="17">
    <location>
        <begin position="236"/>
        <end position="239"/>
    </location>
</feature>
<feature type="helix" evidence="17">
    <location>
        <begin position="246"/>
        <end position="261"/>
    </location>
</feature>
<feature type="helix" evidence="17">
    <location>
        <begin position="271"/>
        <end position="280"/>
    </location>
</feature>
<feature type="helix" evidence="17">
    <location>
        <begin position="287"/>
        <end position="290"/>
    </location>
</feature>
<feature type="helix" evidence="17">
    <location>
        <begin position="295"/>
        <end position="304"/>
    </location>
</feature>
<feature type="turn" evidence="17">
    <location>
        <begin position="309"/>
        <end position="311"/>
    </location>
</feature>
<feature type="helix" evidence="17">
    <location>
        <begin position="315"/>
        <end position="319"/>
    </location>
</feature>
<feature type="helix" evidence="17">
    <location>
        <begin position="322"/>
        <end position="326"/>
    </location>
</feature>
<feature type="helix" evidence="17">
    <location>
        <begin position="333"/>
        <end position="335"/>
    </location>
</feature>
<feature type="helix" evidence="17">
    <location>
        <begin position="336"/>
        <end position="348"/>
    </location>
</feature>
<feature type="helix" evidence="17">
    <location>
        <begin position="354"/>
        <end position="366"/>
    </location>
</feature>
<feature type="helix" evidence="17">
    <location>
        <begin position="370"/>
        <end position="383"/>
    </location>
</feature>
<feature type="strand" evidence="17">
    <location>
        <begin position="388"/>
        <end position="391"/>
    </location>
</feature>
<feature type="helix" evidence="17">
    <location>
        <begin position="393"/>
        <end position="406"/>
    </location>
</feature>
<feature type="helix" evidence="17">
    <location>
        <begin position="416"/>
        <end position="427"/>
    </location>
</feature>
<feature type="strand" evidence="17">
    <location>
        <begin position="432"/>
        <end position="436"/>
    </location>
</feature>
<feature type="helix" evidence="17">
    <location>
        <begin position="437"/>
        <end position="444"/>
    </location>
</feature>
<feature type="helix" evidence="17">
    <location>
        <begin position="447"/>
        <end position="450"/>
    </location>
</feature>
<feature type="helix" evidence="17">
    <location>
        <begin position="453"/>
        <end position="463"/>
    </location>
</feature>
<feature type="strand" evidence="17">
    <location>
        <begin position="469"/>
        <end position="471"/>
    </location>
</feature>
<feature type="helix" evidence="17">
    <location>
        <begin position="473"/>
        <end position="479"/>
    </location>
</feature>
<feature type="helix" evidence="17">
    <location>
        <begin position="487"/>
        <end position="495"/>
    </location>
</feature>
<feature type="strand" evidence="17">
    <location>
        <begin position="502"/>
        <end position="506"/>
    </location>
</feature>
<feature type="helix" evidence="17">
    <location>
        <begin position="507"/>
        <end position="517"/>
    </location>
</feature>
<gene>
    <name evidence="11" type="primary">CDPK1</name>
    <name evidence="15" type="ORF">PBANKA_0314200</name>
</gene>